<comment type="function">
    <text>Inhibitor of the PP1 regulatory subunit PPP1CA.</text>
</comment>
<comment type="subcellular location">
    <subcellularLocation>
        <location evidence="1">Endomembrane system</location>
        <topology evidence="1">Peripheral membrane protein</topology>
    </subcellularLocation>
</comment>
<comment type="PTM">
    <text evidence="1">Has over 600-fold higher inhibitory activity when phosphorylated, creating a molecular switch for regulating the phosphorylation status of PPP1CA substrates and smooth muscle contraction. The main inhibitory site appears to be Thr-72 (By similarity).</text>
</comment>
<comment type="similarity">
    <text evidence="5">Belongs to the PP1 inhibitor family.</text>
</comment>
<sequence>MSVVTGGGEAAGGTSGGGARVFFQSPRGGTGGSRESSSHSGSSREDSAPVATVAAAGQVQQQQRRHQQGKVTVKYDRKELRKRLVLEEWIVEQLGQLYGCEEEEMPDVEIDIDDLLDADSEEERASKLQEALVDCYKPTEEFIRELLSRIRGMRKLSPPQKKSV</sequence>
<gene>
    <name type="primary">Ppp1r14c</name>
    <name type="synonym">Kepi</name>
</gene>
<protein>
    <recommendedName>
        <fullName>Protein phosphatase 1 regulatory subunit 14C</fullName>
    </recommendedName>
    <alternativeName>
        <fullName>Kinase-enhanced PP1 inhibitor</fullName>
    </alternativeName>
    <alternativeName>
        <fullName>PKC-potentiated PP1 inhibitory protein</fullName>
    </alternativeName>
</protein>
<feature type="initiator methionine" description="Removed" evidence="3">
    <location>
        <position position="1"/>
    </location>
</feature>
<feature type="chain" id="PRO_0000071496" description="Protein phosphatase 1 regulatory subunit 14C">
    <location>
        <begin position="2"/>
        <end position="164"/>
    </location>
</feature>
<feature type="region of interest" description="Disordered" evidence="4">
    <location>
        <begin position="1"/>
        <end position="72"/>
    </location>
</feature>
<feature type="compositionally biased region" description="Gly residues" evidence="4">
    <location>
        <begin position="1"/>
        <end position="19"/>
    </location>
</feature>
<feature type="compositionally biased region" description="Low complexity" evidence="4">
    <location>
        <begin position="50"/>
        <end position="62"/>
    </location>
</feature>
<feature type="modified residue" description="N-acetylserine" evidence="3">
    <location>
        <position position="2"/>
    </location>
</feature>
<feature type="modified residue" description="Phosphoserine" evidence="6">
    <location>
        <position position="25"/>
    </location>
</feature>
<feature type="modified residue" description="Omega-N-methylarginine" evidence="2">
    <location>
        <position position="27"/>
    </location>
</feature>
<feature type="modified residue" description="Phosphoserine" evidence="3">
    <location>
        <position position="33"/>
    </location>
</feature>
<feature type="modified residue" description="Phosphothreonine; by ILK1" evidence="3">
    <location>
        <position position="72"/>
    </location>
</feature>
<reference key="1">
    <citation type="journal article" date="2002" name="J. Biol. Chem.">
        <title>KEPI, a PKC-dependent protein phosphatase 1 inhibitor regulated by morphine.</title>
        <authorList>
            <person name="Liu Q.-R."/>
            <person name="Zhang P.-W."/>
            <person name="Zhen Q."/>
            <person name="Walther D."/>
            <person name="Wang X.-B."/>
            <person name="Uhl G."/>
        </authorList>
    </citation>
    <scope>NUCLEOTIDE SEQUENCE [MRNA]</scope>
    <source>
        <strain>Sprague-Dawley</strain>
        <tissue>Brain</tissue>
    </source>
</reference>
<reference key="2">
    <citation type="journal article" date="2004" name="Genome Res.">
        <title>The status, quality, and expansion of the NIH full-length cDNA project: the Mammalian Gene Collection (MGC).</title>
        <authorList>
            <consortium name="The MGC Project Team"/>
        </authorList>
    </citation>
    <scope>NUCLEOTIDE SEQUENCE [LARGE SCALE MRNA]</scope>
    <source>
        <tissue>Heart</tissue>
    </source>
</reference>
<reference key="3">
    <citation type="submission" date="2007-09" db="UniProtKB">
        <authorList>
            <person name="Lubec G."/>
            <person name="Kang S.U."/>
            <person name="Lubec S."/>
        </authorList>
    </citation>
    <scope>PROTEIN SEQUENCE OF 35-44</scope>
    <scope>IDENTIFICATION BY MASS SPECTROMETRY</scope>
    <source>
        <strain>Sprague-Dawley</strain>
        <tissue>Brain</tissue>
    </source>
</reference>
<reference key="4">
    <citation type="journal article" date="2012" name="Nat. Commun.">
        <title>Quantitative maps of protein phosphorylation sites across 14 different rat organs and tissues.</title>
        <authorList>
            <person name="Lundby A."/>
            <person name="Secher A."/>
            <person name="Lage K."/>
            <person name="Nordsborg N.B."/>
            <person name="Dmytriyev A."/>
            <person name="Lundby C."/>
            <person name="Olsen J.V."/>
        </authorList>
    </citation>
    <scope>PHOSPHORYLATION [LARGE SCALE ANALYSIS] AT SER-25</scope>
    <scope>IDENTIFICATION BY MASS SPECTROMETRY [LARGE SCALE ANALYSIS]</scope>
</reference>
<keyword id="KW-0007">Acetylation</keyword>
<keyword id="KW-0903">Direct protein sequencing</keyword>
<keyword id="KW-0472">Membrane</keyword>
<keyword id="KW-0488">Methylation</keyword>
<keyword id="KW-0597">Phosphoprotein</keyword>
<keyword id="KW-0650">Protein phosphatase inhibitor</keyword>
<keyword id="KW-1185">Reference proteome</keyword>
<accession>Q8R4R9</accession>
<proteinExistence type="evidence at protein level"/>
<name>PP14C_RAT</name>
<dbReference type="EMBL" id="AF407168">
    <property type="protein sequence ID" value="AAL83509.1"/>
    <property type="molecule type" value="mRNA"/>
</dbReference>
<dbReference type="EMBL" id="BC086978">
    <property type="protein sequence ID" value="AAH86978.1"/>
    <property type="molecule type" value="mRNA"/>
</dbReference>
<dbReference type="RefSeq" id="NP_596916.1">
    <property type="nucleotide sequence ID" value="NM_133425.3"/>
</dbReference>
<dbReference type="FunCoup" id="Q8R4R9">
    <property type="interactions" value="314"/>
</dbReference>
<dbReference type="STRING" id="10116.ENSRNOP00000022046"/>
<dbReference type="iPTMnet" id="Q8R4R9"/>
<dbReference type="PhosphoSitePlus" id="Q8R4R9"/>
<dbReference type="jPOST" id="Q8R4R9"/>
<dbReference type="PaxDb" id="10116-ENSRNOP00000022046"/>
<dbReference type="Ensembl" id="ENSRNOT00000022046.4">
    <property type="protein sequence ID" value="ENSRNOP00000022046.2"/>
    <property type="gene ID" value="ENSRNOG00000016368.5"/>
</dbReference>
<dbReference type="GeneID" id="171010"/>
<dbReference type="KEGG" id="rno:171010"/>
<dbReference type="UCSC" id="RGD:620538">
    <property type="organism name" value="rat"/>
</dbReference>
<dbReference type="AGR" id="RGD:620538"/>
<dbReference type="CTD" id="81706"/>
<dbReference type="RGD" id="620538">
    <property type="gene designation" value="Ppp1r14c"/>
</dbReference>
<dbReference type="eggNOG" id="ENOG502RYQF">
    <property type="taxonomic scope" value="Eukaryota"/>
</dbReference>
<dbReference type="GeneTree" id="ENSGT00950000182985"/>
<dbReference type="HOGENOM" id="CLU_114155_1_0_1"/>
<dbReference type="InParanoid" id="Q8R4R9"/>
<dbReference type="OrthoDB" id="8193882at2759"/>
<dbReference type="PhylomeDB" id="Q8R4R9"/>
<dbReference type="TreeFam" id="TF105546"/>
<dbReference type="PRO" id="PR:Q8R4R9"/>
<dbReference type="Proteomes" id="UP000002494">
    <property type="component" value="Chromosome 1"/>
</dbReference>
<dbReference type="Bgee" id="ENSRNOG00000016368">
    <property type="expression patterns" value="Expressed in heart and 16 other cell types or tissues"/>
</dbReference>
<dbReference type="GO" id="GO:0005737">
    <property type="term" value="C:cytoplasm"/>
    <property type="evidence" value="ECO:0007669"/>
    <property type="project" value="InterPro"/>
</dbReference>
<dbReference type="GO" id="GO:0012505">
    <property type="term" value="C:endomembrane system"/>
    <property type="evidence" value="ECO:0007669"/>
    <property type="project" value="UniProtKB-SubCell"/>
</dbReference>
<dbReference type="GO" id="GO:0016020">
    <property type="term" value="C:membrane"/>
    <property type="evidence" value="ECO:0000314"/>
    <property type="project" value="MGI"/>
</dbReference>
<dbReference type="GO" id="GO:0004865">
    <property type="term" value="F:protein serine/threonine phosphatase inhibitor activity"/>
    <property type="evidence" value="ECO:0000314"/>
    <property type="project" value="RGD"/>
</dbReference>
<dbReference type="FunFam" id="1.10.150.220:FF:000001">
    <property type="entry name" value="Phosphatase 1, regulatory (Inhibitor) subunit 14C"/>
    <property type="match status" value="1"/>
</dbReference>
<dbReference type="Gene3D" id="1.10.150.220">
    <property type="entry name" value="CPI-17"/>
    <property type="match status" value="1"/>
</dbReference>
<dbReference type="InterPro" id="IPR008025">
    <property type="entry name" value="CPI-17"/>
</dbReference>
<dbReference type="InterPro" id="IPR036658">
    <property type="entry name" value="CPI-17_sf"/>
</dbReference>
<dbReference type="PANTHER" id="PTHR16188">
    <property type="entry name" value="PROTEIN PHOSPHATASE 1 INHIBITOR POTENTIATED BY PROTEIN KINASE C"/>
    <property type="match status" value="1"/>
</dbReference>
<dbReference type="PANTHER" id="PTHR16188:SF6">
    <property type="entry name" value="PROTEIN PHOSPHATASE 1 REGULATORY SUBUNIT 14C"/>
    <property type="match status" value="1"/>
</dbReference>
<dbReference type="Pfam" id="PF05361">
    <property type="entry name" value="PP1_inhibitor"/>
    <property type="match status" value="1"/>
</dbReference>
<dbReference type="SUPFAM" id="SSF81790">
    <property type="entry name" value="Myosin phosphatase inhibitor 17kDa protein, CPI-17"/>
    <property type="match status" value="1"/>
</dbReference>
<evidence type="ECO:0000250" key="1"/>
<evidence type="ECO:0000250" key="2">
    <source>
        <dbReference type="UniProtKB" id="Q8R4S0"/>
    </source>
</evidence>
<evidence type="ECO:0000250" key="3">
    <source>
        <dbReference type="UniProtKB" id="Q8TAE6"/>
    </source>
</evidence>
<evidence type="ECO:0000256" key="4">
    <source>
        <dbReference type="SAM" id="MobiDB-lite"/>
    </source>
</evidence>
<evidence type="ECO:0000305" key="5"/>
<evidence type="ECO:0007744" key="6">
    <source>
    </source>
</evidence>
<organism>
    <name type="scientific">Rattus norvegicus</name>
    <name type="common">Rat</name>
    <dbReference type="NCBI Taxonomy" id="10116"/>
    <lineage>
        <taxon>Eukaryota</taxon>
        <taxon>Metazoa</taxon>
        <taxon>Chordata</taxon>
        <taxon>Craniata</taxon>
        <taxon>Vertebrata</taxon>
        <taxon>Euteleostomi</taxon>
        <taxon>Mammalia</taxon>
        <taxon>Eutheria</taxon>
        <taxon>Euarchontoglires</taxon>
        <taxon>Glires</taxon>
        <taxon>Rodentia</taxon>
        <taxon>Myomorpha</taxon>
        <taxon>Muroidea</taxon>
        <taxon>Muridae</taxon>
        <taxon>Murinae</taxon>
        <taxon>Rattus</taxon>
    </lineage>
</organism>